<dbReference type="EMBL" id="L77117">
    <property type="protein sequence ID" value="AAB99326.1"/>
    <property type="molecule type" value="Genomic_DNA"/>
</dbReference>
<dbReference type="PIR" id="D64462">
    <property type="entry name" value="D64462"/>
</dbReference>
<dbReference type="STRING" id="243232.MJ_1301"/>
<dbReference type="PaxDb" id="243232-MJ_1301"/>
<dbReference type="DNASU" id="1452203"/>
<dbReference type="EnsemblBacteria" id="AAB99326">
    <property type="protein sequence ID" value="AAB99326"/>
    <property type="gene ID" value="MJ_1301"/>
</dbReference>
<dbReference type="KEGG" id="mja:MJ_1301"/>
<dbReference type="eggNOG" id="arCOG03407">
    <property type="taxonomic scope" value="Archaea"/>
</dbReference>
<dbReference type="HOGENOM" id="CLU_068608_0_0_2"/>
<dbReference type="InParanoid" id="Q58697"/>
<dbReference type="OrthoDB" id="65289at2157"/>
<dbReference type="PhylomeDB" id="Q58697"/>
<dbReference type="Proteomes" id="UP000000805">
    <property type="component" value="Chromosome"/>
</dbReference>
<dbReference type="GO" id="GO:0005524">
    <property type="term" value="F:ATP binding"/>
    <property type="evidence" value="ECO:0007669"/>
    <property type="project" value="UniProtKB-KW"/>
</dbReference>
<dbReference type="GO" id="GO:0016887">
    <property type="term" value="F:ATP hydrolysis activity"/>
    <property type="evidence" value="ECO:0007669"/>
    <property type="project" value="InterPro"/>
</dbReference>
<dbReference type="CDD" id="cd00009">
    <property type="entry name" value="AAA"/>
    <property type="match status" value="1"/>
</dbReference>
<dbReference type="Gene3D" id="3.40.50.300">
    <property type="entry name" value="P-loop containing nucleotide triphosphate hydrolases"/>
    <property type="match status" value="1"/>
</dbReference>
<dbReference type="Gene3D" id="1.10.10.10">
    <property type="entry name" value="Winged helix-like DNA-binding domain superfamily/Winged helix DNA-binding domain"/>
    <property type="match status" value="1"/>
</dbReference>
<dbReference type="InterPro" id="IPR003593">
    <property type="entry name" value="AAA+_ATPase"/>
</dbReference>
<dbReference type="InterPro" id="IPR051667">
    <property type="entry name" value="Archaeal_ATPase_domain"/>
</dbReference>
<dbReference type="InterPro" id="IPR011579">
    <property type="entry name" value="ATPase_dom"/>
</dbReference>
<dbReference type="InterPro" id="IPR049081">
    <property type="entry name" value="MJ1010-like_2nd"/>
</dbReference>
<dbReference type="InterPro" id="IPR027417">
    <property type="entry name" value="P-loop_NTPase"/>
</dbReference>
<dbReference type="InterPro" id="IPR036388">
    <property type="entry name" value="WH-like_DNA-bd_sf"/>
</dbReference>
<dbReference type="PANTHER" id="PTHR37096:SF1">
    <property type="entry name" value="AAA+ ATPASE DOMAIN-CONTAINING PROTEIN"/>
    <property type="match status" value="1"/>
</dbReference>
<dbReference type="PANTHER" id="PTHR37096">
    <property type="entry name" value="YALI0E33429P"/>
    <property type="match status" value="1"/>
</dbReference>
<dbReference type="Pfam" id="PF01637">
    <property type="entry name" value="ATPase_2"/>
    <property type="match status" value="2"/>
</dbReference>
<dbReference type="Pfam" id="PF21690">
    <property type="entry name" value="MJ1010-like_2nd"/>
    <property type="match status" value="1"/>
</dbReference>
<dbReference type="SMART" id="SM00382">
    <property type="entry name" value="AAA"/>
    <property type="match status" value="1"/>
</dbReference>
<dbReference type="SUPFAM" id="SSF52540">
    <property type="entry name" value="P-loop containing nucleoside triphosphate hydrolases"/>
    <property type="match status" value="1"/>
</dbReference>
<accession>Q58697</accession>
<feature type="chain" id="PRO_0000184675" description="Uncharacterized ATP-binding protein MJ1301">
    <location>
        <begin position="1"/>
        <end position="400"/>
    </location>
</feature>
<feature type="binding site" evidence="1">
    <location>
        <begin position="36"/>
        <end position="43"/>
    </location>
    <ligand>
        <name>ATP</name>
        <dbReference type="ChEBI" id="CHEBI:30616"/>
    </ligand>
</feature>
<comment type="similarity">
    <text evidence="2">Belongs to the archaeal ATPase family.</text>
</comment>
<gene>
    <name type="ordered locus">MJ1301</name>
</gene>
<sequence length="400" mass="46904">MGILVIFMKFFNREKEIHKILSIIEGEPNLIYFIYGSINSGKTALINEIINNRLDKNKYIVFYFDLREIFISKYDDFIEVLFEEYEGDKSPIEVIKAIINDLPSLYGIPIPKNTLNEIFKKKTTKNVFRYITNVLMDIKREGKQPIIIIDELQKIGDMKINGFLIYELFNYFVSLTKHKHLCHVFCLSSDSLFIERVYNEAMLEDRVDYILVDDHRGGYAPSIGILPQIESGVAFGNPALEYSNRGFASMRGEYILVDDFDKETALKFMDFLAKENNMSLTNEDKELIYNYVGGKPVLIIKVIDKLRYENLNDILDFMLKDATQKLKYFLEDVKEEDEELYKKVVDALKLFKEDYEIEDIKIPKKIREFLIKRNILFLNPIEGILKPQSFLVWNAIKKVL</sequence>
<name>Y1301_METJA</name>
<proteinExistence type="inferred from homology"/>
<reference key="1">
    <citation type="journal article" date="1996" name="Science">
        <title>Complete genome sequence of the methanogenic archaeon, Methanococcus jannaschii.</title>
        <authorList>
            <person name="Bult C.J."/>
            <person name="White O."/>
            <person name="Olsen G.J."/>
            <person name="Zhou L."/>
            <person name="Fleischmann R.D."/>
            <person name="Sutton G.G."/>
            <person name="Blake J.A."/>
            <person name="FitzGerald L.M."/>
            <person name="Clayton R.A."/>
            <person name="Gocayne J.D."/>
            <person name="Kerlavage A.R."/>
            <person name="Dougherty B.A."/>
            <person name="Tomb J.-F."/>
            <person name="Adams M.D."/>
            <person name="Reich C.I."/>
            <person name="Overbeek R."/>
            <person name="Kirkness E.F."/>
            <person name="Weinstock K.G."/>
            <person name="Merrick J.M."/>
            <person name="Glodek A."/>
            <person name="Scott J.L."/>
            <person name="Geoghagen N.S.M."/>
            <person name="Weidman J.F."/>
            <person name="Fuhrmann J.L."/>
            <person name="Nguyen D."/>
            <person name="Utterback T.R."/>
            <person name="Kelley J.M."/>
            <person name="Peterson J.D."/>
            <person name="Sadow P.W."/>
            <person name="Hanna M.C."/>
            <person name="Cotton M.D."/>
            <person name="Roberts K.M."/>
            <person name="Hurst M.A."/>
            <person name="Kaine B.P."/>
            <person name="Borodovsky M."/>
            <person name="Klenk H.-P."/>
            <person name="Fraser C.M."/>
            <person name="Smith H.O."/>
            <person name="Woese C.R."/>
            <person name="Venter J.C."/>
        </authorList>
    </citation>
    <scope>NUCLEOTIDE SEQUENCE [LARGE SCALE GENOMIC DNA]</scope>
    <source>
        <strain>ATCC 43067 / DSM 2661 / JAL-1 / JCM 10045 / NBRC 100440</strain>
    </source>
</reference>
<reference key="2">
    <citation type="journal article" date="1997" name="Science">
        <title>Evidence for a family of archaeal ATPases.</title>
        <authorList>
            <person name="Koonin E.V."/>
        </authorList>
    </citation>
    <scope>SIMILARITY</scope>
</reference>
<protein>
    <recommendedName>
        <fullName>Uncharacterized ATP-binding protein MJ1301</fullName>
    </recommendedName>
</protein>
<keyword id="KW-0067">ATP-binding</keyword>
<keyword id="KW-0547">Nucleotide-binding</keyword>
<keyword id="KW-1185">Reference proteome</keyword>
<organism>
    <name type="scientific">Methanocaldococcus jannaschii (strain ATCC 43067 / DSM 2661 / JAL-1 / JCM 10045 / NBRC 100440)</name>
    <name type="common">Methanococcus jannaschii</name>
    <dbReference type="NCBI Taxonomy" id="243232"/>
    <lineage>
        <taxon>Archaea</taxon>
        <taxon>Methanobacteriati</taxon>
        <taxon>Methanobacteriota</taxon>
        <taxon>Methanomada group</taxon>
        <taxon>Methanococci</taxon>
        <taxon>Methanococcales</taxon>
        <taxon>Methanocaldococcaceae</taxon>
        <taxon>Methanocaldococcus</taxon>
    </lineage>
</organism>
<evidence type="ECO:0000255" key="1"/>
<evidence type="ECO:0000305" key="2"/>